<sequence>MKVTLFVTCLVDMFETNVGKATVEVLERLGCEIEFPEAQVCCGQPAYNSGHVEAAKEAMKHMIETFEDAEYIVTPSGSCATMFHEYPHVFKDDPKWAKRAQKVADKTYEFTQFIVDVLKVTDVGASLPGIATIHKSCHMTRMLGVTEAPGILLSNVKGLTVRELPNVQNCCGFGGTFSVKMTPISEQMVDEKVDSAMETGADYLIGADCGCLLNIGGRIERLGKEIKVMHIAEVLNSRS</sequence>
<reference key="1">
    <citation type="journal article" date="2007" name="J. Bacteriol.">
        <title>The complete genome sequence of Bacillus thuringiensis Al Hakam.</title>
        <authorList>
            <person name="Challacombe J.F."/>
            <person name="Altherr M.R."/>
            <person name="Xie G."/>
            <person name="Bhotika S.S."/>
            <person name="Brown N."/>
            <person name="Bruce D."/>
            <person name="Campbell C.S."/>
            <person name="Campbell M.L."/>
            <person name="Chen J."/>
            <person name="Chertkov O."/>
            <person name="Cleland C."/>
            <person name="Dimitrijevic M."/>
            <person name="Doggett N.A."/>
            <person name="Fawcett J.J."/>
            <person name="Glavina T."/>
            <person name="Goodwin L.A."/>
            <person name="Green L.D."/>
            <person name="Han C.S."/>
            <person name="Hill K.K."/>
            <person name="Hitchcock P."/>
            <person name="Jackson P.J."/>
            <person name="Keim P."/>
            <person name="Kewalramani A.R."/>
            <person name="Longmire J."/>
            <person name="Lucas S."/>
            <person name="Malfatti S."/>
            <person name="Martinez D."/>
            <person name="McMurry K."/>
            <person name="Meincke L.J."/>
            <person name="Misra M."/>
            <person name="Moseman B.L."/>
            <person name="Mundt M."/>
            <person name="Munk A.C."/>
            <person name="Okinaka R.T."/>
            <person name="Parson-Quintana B."/>
            <person name="Reilly L.P."/>
            <person name="Richardson P."/>
            <person name="Robinson D.L."/>
            <person name="Saunders E."/>
            <person name="Tapia R."/>
            <person name="Tesmer J.G."/>
            <person name="Thayer N."/>
            <person name="Thompson L.S."/>
            <person name="Tice H."/>
            <person name="Ticknor L.O."/>
            <person name="Wills P.L."/>
            <person name="Gilna P."/>
            <person name="Brettin T.S."/>
        </authorList>
    </citation>
    <scope>NUCLEOTIDE SEQUENCE [LARGE SCALE GENOMIC DNA]</scope>
    <source>
        <strain>Al Hakam</strain>
    </source>
</reference>
<organism>
    <name type="scientific">Bacillus thuringiensis (strain Al Hakam)</name>
    <dbReference type="NCBI Taxonomy" id="412694"/>
    <lineage>
        <taxon>Bacteria</taxon>
        <taxon>Bacillati</taxon>
        <taxon>Bacillota</taxon>
        <taxon>Bacilli</taxon>
        <taxon>Bacillales</taxon>
        <taxon>Bacillaceae</taxon>
        <taxon>Bacillus</taxon>
        <taxon>Bacillus cereus group</taxon>
    </lineage>
</organism>
<proteinExistence type="inferred from homology"/>
<dbReference type="EMBL" id="CP000485">
    <property type="protein sequence ID" value="ABK84520.1"/>
    <property type="molecule type" value="Genomic_DNA"/>
</dbReference>
<dbReference type="RefSeq" id="WP_000869149.1">
    <property type="nucleotide sequence ID" value="NC_008600.1"/>
</dbReference>
<dbReference type="SMR" id="A0RBC7"/>
<dbReference type="KEGG" id="btl:BALH_1165"/>
<dbReference type="HOGENOM" id="CLU_023081_1_0_9"/>
<dbReference type="GO" id="GO:0005829">
    <property type="term" value="C:cytosol"/>
    <property type="evidence" value="ECO:0007669"/>
    <property type="project" value="TreeGrafter"/>
</dbReference>
<dbReference type="GO" id="GO:0016491">
    <property type="term" value="F:oxidoreductase activity"/>
    <property type="evidence" value="ECO:0007669"/>
    <property type="project" value="UniProtKB-ARBA"/>
</dbReference>
<dbReference type="GO" id="GO:0006089">
    <property type="term" value="P:lactate metabolic process"/>
    <property type="evidence" value="ECO:0007669"/>
    <property type="project" value="UniProtKB-UniRule"/>
</dbReference>
<dbReference type="HAMAP" id="MF_02105">
    <property type="entry name" value="LutA"/>
    <property type="match status" value="1"/>
</dbReference>
<dbReference type="InterPro" id="IPR004017">
    <property type="entry name" value="Cys_rich_dom"/>
</dbReference>
<dbReference type="InterPro" id="IPR022822">
    <property type="entry name" value="LutA"/>
</dbReference>
<dbReference type="PANTHER" id="PTHR30296:SF0">
    <property type="entry name" value="LACTATE UTILIZATION PROTEIN A"/>
    <property type="match status" value="1"/>
</dbReference>
<dbReference type="PANTHER" id="PTHR30296">
    <property type="entry name" value="UNCHARACTERIZED PROTEIN YKGE"/>
    <property type="match status" value="1"/>
</dbReference>
<dbReference type="Pfam" id="PF02754">
    <property type="entry name" value="CCG"/>
    <property type="match status" value="2"/>
</dbReference>
<accession>A0RBC7</accession>
<name>LUTA_BACAH</name>
<comment type="function">
    <text evidence="1">Is involved in L-lactate degradation and allows cells to grow with lactate as the sole carbon source.</text>
</comment>
<comment type="similarity">
    <text evidence="1">Belongs to the LutA/YkgE family.</text>
</comment>
<protein>
    <recommendedName>
        <fullName evidence="1">Lactate utilization protein A</fullName>
    </recommendedName>
</protein>
<feature type="chain" id="PRO_0000384022" description="Lactate utilization protein A">
    <location>
        <begin position="1"/>
        <end position="239"/>
    </location>
</feature>
<gene>
    <name evidence="1" type="primary">lutA</name>
    <name type="ordered locus">BALH_1165</name>
</gene>
<evidence type="ECO:0000255" key="1">
    <source>
        <dbReference type="HAMAP-Rule" id="MF_02105"/>
    </source>
</evidence>